<feature type="chain" id="PRO_1000121082" description="DNA replication and repair protein RecF">
    <location>
        <begin position="1"/>
        <end position="360"/>
    </location>
</feature>
<feature type="binding site" evidence="1">
    <location>
        <begin position="30"/>
        <end position="37"/>
    </location>
    <ligand>
        <name>ATP</name>
        <dbReference type="ChEBI" id="CHEBI:30616"/>
    </ligand>
</feature>
<dbReference type="EMBL" id="CP001091">
    <property type="protein sequence ID" value="ACE60655.1"/>
    <property type="molecule type" value="Genomic_DNA"/>
</dbReference>
<dbReference type="RefSeq" id="WP_005616478.1">
    <property type="nucleotide sequence ID" value="NC_010939.1"/>
</dbReference>
<dbReference type="SMR" id="B3GZJ3"/>
<dbReference type="KEGG" id="apa:APP7_0003"/>
<dbReference type="HOGENOM" id="CLU_040267_0_0_6"/>
<dbReference type="Proteomes" id="UP000001226">
    <property type="component" value="Chromosome"/>
</dbReference>
<dbReference type="GO" id="GO:0005737">
    <property type="term" value="C:cytoplasm"/>
    <property type="evidence" value="ECO:0007669"/>
    <property type="project" value="UniProtKB-SubCell"/>
</dbReference>
<dbReference type="GO" id="GO:0005524">
    <property type="term" value="F:ATP binding"/>
    <property type="evidence" value="ECO:0007669"/>
    <property type="project" value="UniProtKB-UniRule"/>
</dbReference>
<dbReference type="GO" id="GO:0003697">
    <property type="term" value="F:single-stranded DNA binding"/>
    <property type="evidence" value="ECO:0007669"/>
    <property type="project" value="UniProtKB-UniRule"/>
</dbReference>
<dbReference type="GO" id="GO:0006260">
    <property type="term" value="P:DNA replication"/>
    <property type="evidence" value="ECO:0007669"/>
    <property type="project" value="UniProtKB-UniRule"/>
</dbReference>
<dbReference type="GO" id="GO:0000731">
    <property type="term" value="P:DNA synthesis involved in DNA repair"/>
    <property type="evidence" value="ECO:0007669"/>
    <property type="project" value="TreeGrafter"/>
</dbReference>
<dbReference type="GO" id="GO:0006302">
    <property type="term" value="P:double-strand break repair"/>
    <property type="evidence" value="ECO:0007669"/>
    <property type="project" value="TreeGrafter"/>
</dbReference>
<dbReference type="GO" id="GO:0009432">
    <property type="term" value="P:SOS response"/>
    <property type="evidence" value="ECO:0007669"/>
    <property type="project" value="UniProtKB-UniRule"/>
</dbReference>
<dbReference type="Gene3D" id="3.40.50.300">
    <property type="entry name" value="P-loop containing nucleotide triphosphate hydrolases"/>
    <property type="match status" value="1"/>
</dbReference>
<dbReference type="Gene3D" id="1.20.1050.90">
    <property type="entry name" value="RecF/RecN/SMC, N-terminal domain"/>
    <property type="match status" value="1"/>
</dbReference>
<dbReference type="HAMAP" id="MF_00365">
    <property type="entry name" value="RecF"/>
    <property type="match status" value="1"/>
</dbReference>
<dbReference type="InterPro" id="IPR001238">
    <property type="entry name" value="DNA-binding_RecF"/>
</dbReference>
<dbReference type="InterPro" id="IPR018078">
    <property type="entry name" value="DNA-binding_RecF_CS"/>
</dbReference>
<dbReference type="InterPro" id="IPR027417">
    <property type="entry name" value="P-loop_NTPase"/>
</dbReference>
<dbReference type="InterPro" id="IPR003395">
    <property type="entry name" value="RecF/RecN/SMC_N"/>
</dbReference>
<dbReference type="InterPro" id="IPR042174">
    <property type="entry name" value="RecF_2"/>
</dbReference>
<dbReference type="NCBIfam" id="TIGR00611">
    <property type="entry name" value="recf"/>
    <property type="match status" value="1"/>
</dbReference>
<dbReference type="PANTHER" id="PTHR32182">
    <property type="entry name" value="DNA REPLICATION AND REPAIR PROTEIN RECF"/>
    <property type="match status" value="1"/>
</dbReference>
<dbReference type="PANTHER" id="PTHR32182:SF0">
    <property type="entry name" value="DNA REPLICATION AND REPAIR PROTEIN RECF"/>
    <property type="match status" value="1"/>
</dbReference>
<dbReference type="Pfam" id="PF02463">
    <property type="entry name" value="SMC_N"/>
    <property type="match status" value="1"/>
</dbReference>
<dbReference type="SUPFAM" id="SSF52540">
    <property type="entry name" value="P-loop containing nucleoside triphosphate hydrolases"/>
    <property type="match status" value="1"/>
</dbReference>
<dbReference type="PROSITE" id="PS00617">
    <property type="entry name" value="RECF_1"/>
    <property type="match status" value="1"/>
</dbReference>
<dbReference type="PROSITE" id="PS00618">
    <property type="entry name" value="RECF_2"/>
    <property type="match status" value="1"/>
</dbReference>
<evidence type="ECO:0000255" key="1">
    <source>
        <dbReference type="HAMAP-Rule" id="MF_00365"/>
    </source>
</evidence>
<name>RECF_ACTP7</name>
<organism>
    <name type="scientific">Actinobacillus pleuropneumoniae serotype 7 (strain AP76)</name>
    <dbReference type="NCBI Taxonomy" id="537457"/>
    <lineage>
        <taxon>Bacteria</taxon>
        <taxon>Pseudomonadati</taxon>
        <taxon>Pseudomonadota</taxon>
        <taxon>Gammaproteobacteria</taxon>
        <taxon>Pasteurellales</taxon>
        <taxon>Pasteurellaceae</taxon>
        <taxon>Actinobacillus</taxon>
    </lineage>
</organism>
<reference key="1">
    <citation type="submission" date="2008-06" db="EMBL/GenBank/DDBJ databases">
        <title>Genome and proteome analysis of A. pleuropneumoniae serotype 7.</title>
        <authorList>
            <person name="Linke B."/>
            <person name="Buettner F."/>
            <person name="Martinez-Arias R."/>
            <person name="Goesmann A."/>
            <person name="Baltes N."/>
            <person name="Tegetmeyer H."/>
            <person name="Singh M."/>
            <person name="Gerlach G.F."/>
        </authorList>
    </citation>
    <scope>NUCLEOTIDE SEQUENCE [LARGE SCALE GENOMIC DNA]</scope>
    <source>
        <strain>AP76</strain>
    </source>
</reference>
<comment type="function">
    <text evidence="1">The RecF protein is involved in DNA metabolism; it is required for DNA replication and normal SOS inducibility. RecF binds preferentially to single-stranded, linear DNA. It also seems to bind ATP.</text>
</comment>
<comment type="subcellular location">
    <subcellularLocation>
        <location evidence="1">Cytoplasm</location>
    </subcellularLocation>
</comment>
<comment type="similarity">
    <text evidence="1">Belongs to the RecF family.</text>
</comment>
<gene>
    <name evidence="1" type="primary">recF</name>
    <name type="ordered locus">APP7_0003</name>
</gene>
<proteinExistence type="inferred from homology"/>
<accession>B3GZJ3</accession>
<keyword id="KW-0067">ATP-binding</keyword>
<keyword id="KW-0963">Cytoplasm</keyword>
<keyword id="KW-0227">DNA damage</keyword>
<keyword id="KW-0234">DNA repair</keyword>
<keyword id="KW-0235">DNA replication</keyword>
<keyword id="KW-0238">DNA-binding</keyword>
<keyword id="KW-0547">Nucleotide-binding</keyword>
<keyword id="KW-0742">SOS response</keyword>
<sequence length="360" mass="41285">MPLSRLIINNFRNLQSLDLELSPNFNFIVGHNGSGKTSLLEAIFYLGHGRSFKSHISNRIIHYQAEDFVLHARIDEGQHQWSVGIQKKRSGDTLLKINGEDGNKISDLAHLLPMQVITPEGLTLLNGGPTFRRAFLDWGLFHQYTEFYSCWANLKRLLKQRNAALHQVRSYAELKPWDIELAKLAEIVSQMRASYAEALRPEIEKTCQFFLPELEIGVSFHQGWEKGTDYAEILAQGFERDKAMGYTMIGPQKADFRFRANGLPVEDVLSRGQLKLLMCVLRLAQGEYLVAQKERQCLFLIDDFASELDPIKRELLAHRLRESGSQVFVTAITKDQLNQMQWQESEQDSLFQVQQGMLTK</sequence>
<protein>
    <recommendedName>
        <fullName evidence="1">DNA replication and repair protein RecF</fullName>
    </recommendedName>
</protein>